<keyword id="KW-0903">Direct protein sequencing</keyword>
<keyword id="KW-0408">Iron</keyword>
<keyword id="KW-0409">Iron storage</keyword>
<keyword id="KW-0479">Metal-binding</keyword>
<keyword id="KW-1185">Reference proteome</keyword>
<organism evidence="7">
    <name type="scientific">Xenopus laevis</name>
    <name type="common">African clawed frog</name>
    <dbReference type="NCBI Taxonomy" id="8355"/>
    <lineage>
        <taxon>Eukaryota</taxon>
        <taxon>Metazoa</taxon>
        <taxon>Chordata</taxon>
        <taxon>Craniata</taxon>
        <taxon>Vertebrata</taxon>
        <taxon>Euteleostomi</taxon>
        <taxon>Amphibia</taxon>
        <taxon>Batrachia</taxon>
        <taxon>Anura</taxon>
        <taxon>Pipoidea</taxon>
        <taxon>Pipidae</taxon>
        <taxon>Xenopodinae</taxon>
        <taxon>Xenopus</taxon>
        <taxon>Xenopus</taxon>
    </lineage>
</organism>
<dbReference type="EMBL" id="AF538971">
    <property type="protein sequence ID" value="AAQ10929.1"/>
    <property type="molecule type" value="mRNA"/>
</dbReference>
<dbReference type="SMR" id="Q7SXA5"/>
<dbReference type="Proteomes" id="UP000186698">
    <property type="component" value="Unplaced"/>
</dbReference>
<dbReference type="GO" id="GO:0005737">
    <property type="term" value="C:cytoplasm"/>
    <property type="evidence" value="ECO:0000318"/>
    <property type="project" value="GO_Central"/>
</dbReference>
<dbReference type="GO" id="GO:0008199">
    <property type="term" value="F:ferric iron binding"/>
    <property type="evidence" value="ECO:0000318"/>
    <property type="project" value="GO_Central"/>
</dbReference>
<dbReference type="GO" id="GO:0008198">
    <property type="term" value="F:ferrous iron binding"/>
    <property type="evidence" value="ECO:0000318"/>
    <property type="project" value="GO_Central"/>
</dbReference>
<dbReference type="GO" id="GO:0006879">
    <property type="term" value="P:intracellular iron ion homeostasis"/>
    <property type="evidence" value="ECO:0007669"/>
    <property type="project" value="UniProtKB-KW"/>
</dbReference>
<dbReference type="GO" id="GO:0006826">
    <property type="term" value="P:iron ion transport"/>
    <property type="evidence" value="ECO:0007669"/>
    <property type="project" value="InterPro"/>
</dbReference>
<dbReference type="CDD" id="cd01056">
    <property type="entry name" value="Euk_Ferritin"/>
    <property type="match status" value="1"/>
</dbReference>
<dbReference type="FunFam" id="1.20.1260.10:FF:000002">
    <property type="entry name" value="Ferritin, mitochondrial"/>
    <property type="match status" value="1"/>
</dbReference>
<dbReference type="Gene3D" id="1.20.1260.10">
    <property type="match status" value="1"/>
</dbReference>
<dbReference type="InterPro" id="IPR001519">
    <property type="entry name" value="Ferritin"/>
</dbReference>
<dbReference type="InterPro" id="IPR012347">
    <property type="entry name" value="Ferritin-like"/>
</dbReference>
<dbReference type="InterPro" id="IPR009040">
    <property type="entry name" value="Ferritin-like_diiron"/>
</dbReference>
<dbReference type="InterPro" id="IPR009078">
    <property type="entry name" value="Ferritin-like_SF"/>
</dbReference>
<dbReference type="InterPro" id="IPR014034">
    <property type="entry name" value="Ferritin_CS"/>
</dbReference>
<dbReference type="InterPro" id="IPR008331">
    <property type="entry name" value="Ferritin_DPS_dom"/>
</dbReference>
<dbReference type="PANTHER" id="PTHR11431">
    <property type="entry name" value="FERRITIN"/>
    <property type="match status" value="1"/>
</dbReference>
<dbReference type="PANTHER" id="PTHR11431:SF47">
    <property type="entry name" value="FERRITIN LIGHT CHAIN"/>
    <property type="match status" value="1"/>
</dbReference>
<dbReference type="Pfam" id="PF00210">
    <property type="entry name" value="Ferritin"/>
    <property type="match status" value="1"/>
</dbReference>
<dbReference type="SUPFAM" id="SSF47240">
    <property type="entry name" value="Ferritin-like"/>
    <property type="match status" value="1"/>
</dbReference>
<dbReference type="PROSITE" id="PS00204">
    <property type="entry name" value="FERRITIN_2"/>
    <property type="match status" value="1"/>
</dbReference>
<dbReference type="PROSITE" id="PS50905">
    <property type="entry name" value="FERRITIN_LIKE"/>
    <property type="match status" value="1"/>
</dbReference>
<name>FRIL_XENLA</name>
<sequence length="177" mass="20538">MSAQSQIRQNYHEESEAGVNRIANLELQASYLYLSVGYYFDRDDVALSKFSKFFRELSEKKRDHAEDFLKFQNKRGGRVVLQDVKKPDDDEWGNGTKAMEVALNLEKSINQAVLDLHKIATDHTDPHMQDYLEHEFLEEEVKLIKKLGDHLTNLRRVKAAEEGMGEYLFDKLTLGED</sequence>
<accession>Q7SXA5</accession>
<accession>P83458</accession>
<accession>P83459</accession>
<accession>P83461</accession>
<evidence type="ECO:0000250" key="1"/>
<evidence type="ECO:0000250" key="2">
    <source>
        <dbReference type="UniProtKB" id="P02792"/>
    </source>
</evidence>
<evidence type="ECO:0000250" key="3">
    <source>
        <dbReference type="UniProtKB" id="P02794"/>
    </source>
</evidence>
<evidence type="ECO:0000255" key="4">
    <source>
        <dbReference type="PROSITE-ProRule" id="PRU00085"/>
    </source>
</evidence>
<evidence type="ECO:0000269" key="5">
    <source>
    </source>
</evidence>
<evidence type="ECO:0000305" key="6"/>
<evidence type="ECO:0000312" key="7">
    <source>
        <dbReference type="EMBL" id="AAQ10929.1"/>
    </source>
</evidence>
<proteinExistence type="evidence at protein level"/>
<comment type="function">
    <text evidence="1">Stores iron in a soluble, non-toxic, readily available form. Important for iron homeostasis. Iron is taken up in the ferrous form and deposited as ferric hydroxides after oxidation (By similarity).</text>
</comment>
<comment type="subunit">
    <text evidence="2">Oligomer of 24 subunits. There are two types of subunits: L (light) chain and H (heavy) chain. The functional molecule is roughly spherical and contains a central cavity into which the insoluble mineral iron core is deposited.</text>
</comment>
<comment type="miscellaneous">
    <text evidence="1">There are three types of ferritin subunits in amphibia: L, M and H chains. M and H chains are fast mineralizing; the L chain is very slow mineralizing (By similarity).</text>
</comment>
<comment type="similarity">
    <text evidence="6">Belongs to the ferritin family.</text>
</comment>
<feature type="chain" id="PRO_0000201080" description="Ferritin light chain, oocyte isoform">
    <location>
        <begin position="1"/>
        <end position="177"/>
    </location>
</feature>
<feature type="domain" description="Ferritin-like diiron" evidence="4 6">
    <location>
        <begin position="9"/>
        <end position="158"/>
    </location>
</feature>
<feature type="binding site" evidence="3 4">
    <location>
        <position position="26"/>
    </location>
    <ligand>
        <name>Fe cation</name>
        <dbReference type="ChEBI" id="CHEBI:24875"/>
    </ligand>
</feature>
<feature type="binding site" evidence="3 4">
    <location>
        <position position="64"/>
    </location>
    <ligand>
        <name>Fe cation</name>
        <dbReference type="ChEBI" id="CHEBI:24875"/>
    </ligand>
</feature>
<feature type="binding site" evidence="3 4">
    <location>
        <position position="106"/>
    </location>
    <ligand>
        <name>Fe cation</name>
        <dbReference type="ChEBI" id="CHEBI:24875"/>
    </ligand>
</feature>
<feature type="sequence conflict" description="In Ref. 1; AA sequence." evidence="6" ref="1">
    <original>I</original>
    <variation>L</variation>
    <location>
        <position position="109"/>
    </location>
</feature>
<reference evidence="6" key="1">
    <citation type="journal article" date="2003" name="DNA Seq.">
        <title>Two types of new ferritin cDNA sequences from Xenopus laevis germinal vesicle oocytes.</title>
        <authorList>
            <person name="Huang W.-H."/>
            <person name="Guo H.-B."/>
            <person name="Huang X.-Y."/>
            <person name="Sun F.-Z."/>
        </authorList>
    </citation>
    <scope>NUCLEOTIDE SEQUENCE [MRNA]</scope>
    <scope>PROTEIN SEQUENCE OF 63-70; 108-118 AND 146-155</scope>
    <source>
        <tissue evidence="5">Oocyte</tissue>
    </source>
</reference>
<protein>
    <recommendedName>
        <fullName>Ferritin light chain, oocyte isoform</fullName>
    </recommendedName>
    <alternativeName>
        <fullName>B-ferritin</fullName>
    </alternativeName>
    <alternativeName>
        <fullName>GV-LCH</fullName>
    </alternativeName>
    <alternativeName>
        <fullName>XeBF</fullName>
    </alternativeName>
</protein>